<keyword id="KW-0067">ATP-binding</keyword>
<keyword id="KW-0315">Glutamine amidotransferase</keyword>
<keyword id="KW-0332">GMP biosynthesis</keyword>
<keyword id="KW-0436">Ligase</keyword>
<keyword id="KW-0547">Nucleotide-binding</keyword>
<keyword id="KW-0658">Purine biosynthesis</keyword>
<gene>
    <name evidence="1" type="primary">guaA</name>
    <name type="ordered locus">PA14_15340</name>
</gene>
<reference key="1">
    <citation type="journal article" date="2006" name="Genome Biol.">
        <title>Genomic analysis reveals that Pseudomonas aeruginosa virulence is combinatorial.</title>
        <authorList>
            <person name="Lee D.G."/>
            <person name="Urbach J.M."/>
            <person name="Wu G."/>
            <person name="Liberati N.T."/>
            <person name="Feinbaum R.L."/>
            <person name="Miyata S."/>
            <person name="Diggins L.T."/>
            <person name="He J."/>
            <person name="Saucier M."/>
            <person name="Deziel E."/>
            <person name="Friedman L."/>
            <person name="Li L."/>
            <person name="Grills G."/>
            <person name="Montgomery K."/>
            <person name="Kucherlapati R."/>
            <person name="Rahme L.G."/>
            <person name="Ausubel F.M."/>
        </authorList>
    </citation>
    <scope>NUCLEOTIDE SEQUENCE [LARGE SCALE GENOMIC DNA]</scope>
    <source>
        <strain>UCBPP-PA14</strain>
    </source>
</reference>
<accession>Q02RS2</accession>
<dbReference type="EC" id="6.3.5.2" evidence="1"/>
<dbReference type="EMBL" id="CP000438">
    <property type="protein sequence ID" value="ABJ13030.1"/>
    <property type="molecule type" value="Genomic_DNA"/>
</dbReference>
<dbReference type="RefSeq" id="WP_003137878.1">
    <property type="nucleotide sequence ID" value="NZ_CP034244.1"/>
</dbReference>
<dbReference type="SMR" id="Q02RS2"/>
<dbReference type="MEROPS" id="C26.957"/>
<dbReference type="KEGG" id="pau:PA14_15340"/>
<dbReference type="PseudoCAP" id="PA14_15340"/>
<dbReference type="HOGENOM" id="CLU_014340_0_5_6"/>
<dbReference type="BioCyc" id="PAER208963:G1G74-1254-MONOMER"/>
<dbReference type="UniPathway" id="UPA00189">
    <property type="reaction ID" value="UER00296"/>
</dbReference>
<dbReference type="Proteomes" id="UP000000653">
    <property type="component" value="Chromosome"/>
</dbReference>
<dbReference type="GO" id="GO:0005829">
    <property type="term" value="C:cytosol"/>
    <property type="evidence" value="ECO:0007669"/>
    <property type="project" value="TreeGrafter"/>
</dbReference>
<dbReference type="GO" id="GO:0005524">
    <property type="term" value="F:ATP binding"/>
    <property type="evidence" value="ECO:0007669"/>
    <property type="project" value="UniProtKB-UniRule"/>
</dbReference>
<dbReference type="GO" id="GO:0003921">
    <property type="term" value="F:GMP synthase activity"/>
    <property type="evidence" value="ECO:0007669"/>
    <property type="project" value="InterPro"/>
</dbReference>
<dbReference type="CDD" id="cd01742">
    <property type="entry name" value="GATase1_GMP_Synthase"/>
    <property type="match status" value="1"/>
</dbReference>
<dbReference type="CDD" id="cd01997">
    <property type="entry name" value="GMP_synthase_C"/>
    <property type="match status" value="1"/>
</dbReference>
<dbReference type="FunFam" id="3.30.300.10:FF:000002">
    <property type="entry name" value="GMP synthase [glutamine-hydrolyzing]"/>
    <property type="match status" value="1"/>
</dbReference>
<dbReference type="FunFam" id="3.40.50.620:FF:000001">
    <property type="entry name" value="GMP synthase [glutamine-hydrolyzing]"/>
    <property type="match status" value="1"/>
</dbReference>
<dbReference type="FunFam" id="3.40.50.880:FF:000001">
    <property type="entry name" value="GMP synthase [glutamine-hydrolyzing]"/>
    <property type="match status" value="1"/>
</dbReference>
<dbReference type="Gene3D" id="3.30.300.10">
    <property type="match status" value="1"/>
</dbReference>
<dbReference type="Gene3D" id="3.40.50.880">
    <property type="match status" value="1"/>
</dbReference>
<dbReference type="Gene3D" id="3.40.50.620">
    <property type="entry name" value="HUPs"/>
    <property type="match status" value="1"/>
</dbReference>
<dbReference type="HAMAP" id="MF_00344">
    <property type="entry name" value="GMP_synthase"/>
    <property type="match status" value="1"/>
</dbReference>
<dbReference type="InterPro" id="IPR029062">
    <property type="entry name" value="Class_I_gatase-like"/>
</dbReference>
<dbReference type="InterPro" id="IPR017926">
    <property type="entry name" value="GATASE"/>
</dbReference>
<dbReference type="InterPro" id="IPR001674">
    <property type="entry name" value="GMP_synth_C"/>
</dbReference>
<dbReference type="InterPro" id="IPR004739">
    <property type="entry name" value="GMP_synth_GATase"/>
</dbReference>
<dbReference type="InterPro" id="IPR022955">
    <property type="entry name" value="GMP_synthase"/>
</dbReference>
<dbReference type="InterPro" id="IPR025777">
    <property type="entry name" value="GMPS_ATP_PPase_dom"/>
</dbReference>
<dbReference type="InterPro" id="IPR022310">
    <property type="entry name" value="NAD/GMP_synthase"/>
</dbReference>
<dbReference type="InterPro" id="IPR014729">
    <property type="entry name" value="Rossmann-like_a/b/a_fold"/>
</dbReference>
<dbReference type="NCBIfam" id="TIGR00884">
    <property type="entry name" value="guaA_Cterm"/>
    <property type="match status" value="1"/>
</dbReference>
<dbReference type="NCBIfam" id="TIGR00888">
    <property type="entry name" value="guaA_Nterm"/>
    <property type="match status" value="1"/>
</dbReference>
<dbReference type="NCBIfam" id="NF000848">
    <property type="entry name" value="PRK00074.1"/>
    <property type="match status" value="1"/>
</dbReference>
<dbReference type="PANTHER" id="PTHR11922:SF2">
    <property type="entry name" value="GMP SYNTHASE [GLUTAMINE-HYDROLYZING]"/>
    <property type="match status" value="1"/>
</dbReference>
<dbReference type="PANTHER" id="PTHR11922">
    <property type="entry name" value="GMP SYNTHASE-RELATED"/>
    <property type="match status" value="1"/>
</dbReference>
<dbReference type="Pfam" id="PF00117">
    <property type="entry name" value="GATase"/>
    <property type="match status" value="1"/>
</dbReference>
<dbReference type="Pfam" id="PF00958">
    <property type="entry name" value="GMP_synt_C"/>
    <property type="match status" value="1"/>
</dbReference>
<dbReference type="Pfam" id="PF02540">
    <property type="entry name" value="NAD_synthase"/>
    <property type="match status" value="1"/>
</dbReference>
<dbReference type="PRINTS" id="PR00097">
    <property type="entry name" value="ANTSNTHASEII"/>
</dbReference>
<dbReference type="PRINTS" id="PR00099">
    <property type="entry name" value="CPSGATASE"/>
</dbReference>
<dbReference type="PRINTS" id="PR00096">
    <property type="entry name" value="GATASE"/>
</dbReference>
<dbReference type="SUPFAM" id="SSF52402">
    <property type="entry name" value="Adenine nucleotide alpha hydrolases-like"/>
    <property type="match status" value="1"/>
</dbReference>
<dbReference type="SUPFAM" id="SSF52317">
    <property type="entry name" value="Class I glutamine amidotransferase-like"/>
    <property type="match status" value="1"/>
</dbReference>
<dbReference type="SUPFAM" id="SSF54810">
    <property type="entry name" value="GMP synthetase C-terminal dimerisation domain"/>
    <property type="match status" value="1"/>
</dbReference>
<dbReference type="PROSITE" id="PS51273">
    <property type="entry name" value="GATASE_TYPE_1"/>
    <property type="match status" value="1"/>
</dbReference>
<dbReference type="PROSITE" id="PS51553">
    <property type="entry name" value="GMPS_ATP_PPASE"/>
    <property type="match status" value="1"/>
</dbReference>
<proteinExistence type="inferred from homology"/>
<sequence>MSQDIHAHRILILDFGSQYTQLIARRVREIGVYCEIHPFDMSNEAIIAFAPRGIILAGGPESVHEADSPRAPQAVFDLKVPLFGICYGMQTMAEQMGGKVQGSDVREFGYARVDVVGKARLLDGIEDHVDDDGVLGLDVWMSHGDKVTEMPAGFHILASTPSCPIAAMADDARAYYGVQFHPEVTHTKQGLRILSRFVLDICGCAALWTPSNIVDDAIATVRAQVGSSKVLLGLSGGVDSSVVAALLHKAIGDQLTCVFVDNGLLRLHEGDQVMAMFAENMGVKVIRANAEDKFLGRLAGVADPEEKRKIIGRTFIEVFDEEATKLQDVKFLAQGTIYPDVIESAGAKTGKAHVIKSHHNVGGLPEDMQFELVEPLRELFKDEVRKIGLELGLPYDMVYRHPFPGPGLGVRILGEVKKEYADLLRQADHIFIEELRAFDWYHKTSQAFVVFQPVKSVGVVGDGRRYAWVVALRAVETIDFMTARWAHLPYELLEKVSNRIINEIAGISRVTYDVSSKPPATIEWE</sequence>
<feature type="chain" id="PRO_1000120367" description="GMP synthase [glutamine-hydrolyzing]">
    <location>
        <begin position="1"/>
        <end position="525"/>
    </location>
</feature>
<feature type="domain" description="Glutamine amidotransferase type-1" evidence="1">
    <location>
        <begin position="9"/>
        <end position="207"/>
    </location>
</feature>
<feature type="domain" description="GMPS ATP-PPase" evidence="1">
    <location>
        <begin position="208"/>
        <end position="400"/>
    </location>
</feature>
<feature type="active site" description="Nucleophile" evidence="1">
    <location>
        <position position="86"/>
    </location>
</feature>
<feature type="active site" evidence="1">
    <location>
        <position position="181"/>
    </location>
</feature>
<feature type="active site" evidence="1">
    <location>
        <position position="183"/>
    </location>
</feature>
<feature type="binding site" evidence="1">
    <location>
        <begin position="235"/>
        <end position="241"/>
    </location>
    <ligand>
        <name>ATP</name>
        <dbReference type="ChEBI" id="CHEBI:30616"/>
    </ligand>
</feature>
<evidence type="ECO:0000255" key="1">
    <source>
        <dbReference type="HAMAP-Rule" id="MF_00344"/>
    </source>
</evidence>
<comment type="function">
    <text evidence="1">Catalyzes the synthesis of GMP from XMP.</text>
</comment>
<comment type="catalytic activity">
    <reaction evidence="1">
        <text>XMP + L-glutamine + ATP + H2O = GMP + L-glutamate + AMP + diphosphate + 2 H(+)</text>
        <dbReference type="Rhea" id="RHEA:11680"/>
        <dbReference type="ChEBI" id="CHEBI:15377"/>
        <dbReference type="ChEBI" id="CHEBI:15378"/>
        <dbReference type="ChEBI" id="CHEBI:29985"/>
        <dbReference type="ChEBI" id="CHEBI:30616"/>
        <dbReference type="ChEBI" id="CHEBI:33019"/>
        <dbReference type="ChEBI" id="CHEBI:57464"/>
        <dbReference type="ChEBI" id="CHEBI:58115"/>
        <dbReference type="ChEBI" id="CHEBI:58359"/>
        <dbReference type="ChEBI" id="CHEBI:456215"/>
        <dbReference type="EC" id="6.3.5.2"/>
    </reaction>
</comment>
<comment type="pathway">
    <text evidence="1">Purine metabolism; GMP biosynthesis; GMP from XMP (L-Gln route): step 1/1.</text>
</comment>
<comment type="subunit">
    <text evidence="1">Homodimer.</text>
</comment>
<name>GUAA_PSEAB</name>
<protein>
    <recommendedName>
        <fullName evidence="1">GMP synthase [glutamine-hydrolyzing]</fullName>
        <ecNumber evidence="1">6.3.5.2</ecNumber>
    </recommendedName>
    <alternativeName>
        <fullName evidence="1">GMP synthetase</fullName>
    </alternativeName>
    <alternativeName>
        <fullName evidence="1">Glutamine amidotransferase</fullName>
    </alternativeName>
</protein>
<organism>
    <name type="scientific">Pseudomonas aeruginosa (strain UCBPP-PA14)</name>
    <dbReference type="NCBI Taxonomy" id="208963"/>
    <lineage>
        <taxon>Bacteria</taxon>
        <taxon>Pseudomonadati</taxon>
        <taxon>Pseudomonadota</taxon>
        <taxon>Gammaproteobacteria</taxon>
        <taxon>Pseudomonadales</taxon>
        <taxon>Pseudomonadaceae</taxon>
        <taxon>Pseudomonas</taxon>
    </lineage>
</organism>